<feature type="chain" id="PRO_0000242236" description="Phosphomethylpyrimidine synthase">
    <location>
        <begin position="1"/>
        <end position="638"/>
    </location>
</feature>
<feature type="binding site" evidence="1">
    <location>
        <position position="243"/>
    </location>
    <ligand>
        <name>substrate</name>
    </ligand>
</feature>
<feature type="binding site" evidence="1">
    <location>
        <position position="272"/>
    </location>
    <ligand>
        <name>substrate</name>
    </ligand>
</feature>
<feature type="binding site" evidence="1">
    <location>
        <position position="301"/>
    </location>
    <ligand>
        <name>substrate</name>
    </ligand>
</feature>
<feature type="binding site" evidence="1">
    <location>
        <position position="337"/>
    </location>
    <ligand>
        <name>substrate</name>
    </ligand>
</feature>
<feature type="binding site" evidence="1">
    <location>
        <begin position="357"/>
        <end position="359"/>
    </location>
    <ligand>
        <name>substrate</name>
    </ligand>
</feature>
<feature type="binding site" evidence="1">
    <location>
        <begin position="398"/>
        <end position="401"/>
    </location>
    <ligand>
        <name>substrate</name>
    </ligand>
</feature>
<feature type="binding site" evidence="1">
    <location>
        <position position="437"/>
    </location>
    <ligand>
        <name>substrate</name>
    </ligand>
</feature>
<feature type="binding site" evidence="1">
    <location>
        <position position="441"/>
    </location>
    <ligand>
        <name>Zn(2+)</name>
        <dbReference type="ChEBI" id="CHEBI:29105"/>
    </ligand>
</feature>
<feature type="binding site" evidence="1">
    <location>
        <position position="464"/>
    </location>
    <ligand>
        <name>substrate</name>
    </ligand>
</feature>
<feature type="binding site" evidence="1">
    <location>
        <position position="505"/>
    </location>
    <ligand>
        <name>Zn(2+)</name>
        <dbReference type="ChEBI" id="CHEBI:29105"/>
    </ligand>
</feature>
<feature type="binding site" evidence="1">
    <location>
        <position position="585"/>
    </location>
    <ligand>
        <name>[4Fe-4S] cluster</name>
        <dbReference type="ChEBI" id="CHEBI:49883"/>
        <note>4Fe-4S-S-AdoMet</note>
    </ligand>
</feature>
<feature type="binding site" evidence="1">
    <location>
        <position position="588"/>
    </location>
    <ligand>
        <name>[4Fe-4S] cluster</name>
        <dbReference type="ChEBI" id="CHEBI:49883"/>
        <note>4Fe-4S-S-AdoMet</note>
    </ligand>
</feature>
<feature type="binding site" evidence="1">
    <location>
        <position position="593"/>
    </location>
    <ligand>
        <name>[4Fe-4S] cluster</name>
        <dbReference type="ChEBI" id="CHEBI:49883"/>
        <note>4Fe-4S-S-AdoMet</note>
    </ligand>
</feature>
<reference key="1">
    <citation type="journal article" date="2005" name="Arch. Microbiol.">
        <title>The genome sequence of an anaerobic aromatic-degrading denitrifying bacterium, strain EbN1.</title>
        <authorList>
            <person name="Rabus R."/>
            <person name="Kube M."/>
            <person name="Heider J."/>
            <person name="Beck A."/>
            <person name="Heitmann K."/>
            <person name="Widdel F."/>
            <person name="Reinhardt R."/>
        </authorList>
    </citation>
    <scope>NUCLEOTIDE SEQUENCE [LARGE SCALE GENOMIC DNA]</scope>
    <source>
        <strain>DSM 19018 / LMG 30748 / EbN1</strain>
    </source>
</reference>
<keyword id="KW-0004">4Fe-4S</keyword>
<keyword id="KW-0408">Iron</keyword>
<keyword id="KW-0411">Iron-sulfur</keyword>
<keyword id="KW-0456">Lyase</keyword>
<keyword id="KW-0479">Metal-binding</keyword>
<keyword id="KW-1185">Reference proteome</keyword>
<keyword id="KW-0949">S-adenosyl-L-methionine</keyword>
<keyword id="KW-0784">Thiamine biosynthesis</keyword>
<keyword id="KW-0862">Zinc</keyword>
<comment type="function">
    <text evidence="1">Catalyzes the synthesis of the hydroxymethylpyrimidine phosphate (HMP-P) moiety of thiamine from aminoimidazole ribotide (AIR) in a radical S-adenosyl-L-methionine (SAM)-dependent reaction.</text>
</comment>
<comment type="catalytic activity">
    <reaction evidence="1">
        <text>5-amino-1-(5-phospho-beta-D-ribosyl)imidazole + S-adenosyl-L-methionine = 4-amino-2-methyl-5-(phosphooxymethyl)pyrimidine + CO + 5'-deoxyadenosine + formate + L-methionine + 3 H(+)</text>
        <dbReference type="Rhea" id="RHEA:24840"/>
        <dbReference type="ChEBI" id="CHEBI:15378"/>
        <dbReference type="ChEBI" id="CHEBI:15740"/>
        <dbReference type="ChEBI" id="CHEBI:17245"/>
        <dbReference type="ChEBI" id="CHEBI:17319"/>
        <dbReference type="ChEBI" id="CHEBI:57844"/>
        <dbReference type="ChEBI" id="CHEBI:58354"/>
        <dbReference type="ChEBI" id="CHEBI:59789"/>
        <dbReference type="ChEBI" id="CHEBI:137981"/>
        <dbReference type="EC" id="4.1.99.17"/>
    </reaction>
</comment>
<comment type="cofactor">
    <cofactor evidence="1">
        <name>[4Fe-4S] cluster</name>
        <dbReference type="ChEBI" id="CHEBI:49883"/>
    </cofactor>
    <text evidence="1">Binds 1 [4Fe-4S] cluster per subunit. The cluster is coordinated with 3 cysteines and an exchangeable S-adenosyl-L-methionine.</text>
</comment>
<comment type="pathway">
    <text evidence="1">Cofactor biosynthesis; thiamine diphosphate biosynthesis.</text>
</comment>
<comment type="subunit">
    <text evidence="1">Homodimer.</text>
</comment>
<comment type="similarity">
    <text evidence="1">Belongs to the ThiC family.</text>
</comment>
<evidence type="ECO:0000255" key="1">
    <source>
        <dbReference type="HAMAP-Rule" id="MF_00089"/>
    </source>
</evidence>
<name>THIC_AROAE</name>
<protein>
    <recommendedName>
        <fullName evidence="1">Phosphomethylpyrimidine synthase</fullName>
        <ecNumber evidence="1">4.1.99.17</ecNumber>
    </recommendedName>
    <alternativeName>
        <fullName evidence="1">Hydroxymethylpyrimidine phosphate synthase</fullName>
        <shortName evidence="1">HMP-P synthase</shortName>
        <shortName evidence="1">HMP-phosphate synthase</shortName>
        <shortName evidence="1">HMPP synthase</shortName>
    </alternativeName>
    <alternativeName>
        <fullName evidence="1">Thiamine biosynthesis protein ThiC</fullName>
    </alternativeName>
</protein>
<accession>Q5P6L3</accession>
<organism>
    <name type="scientific">Aromatoleum aromaticum (strain DSM 19018 / LMG 30748 / EbN1)</name>
    <name type="common">Azoarcus sp. (strain EbN1)</name>
    <dbReference type="NCBI Taxonomy" id="76114"/>
    <lineage>
        <taxon>Bacteria</taxon>
        <taxon>Pseudomonadati</taxon>
        <taxon>Pseudomonadota</taxon>
        <taxon>Betaproteobacteria</taxon>
        <taxon>Rhodocyclales</taxon>
        <taxon>Rhodocyclaceae</taxon>
        <taxon>Aromatoleum</taxon>
    </lineage>
</organism>
<dbReference type="EC" id="4.1.99.17" evidence="1"/>
<dbReference type="EMBL" id="CR555306">
    <property type="protein sequence ID" value="CAI07048.1"/>
    <property type="molecule type" value="Genomic_DNA"/>
</dbReference>
<dbReference type="RefSeq" id="WP_011236773.1">
    <property type="nucleotide sequence ID" value="NC_006513.1"/>
</dbReference>
<dbReference type="SMR" id="Q5P6L3"/>
<dbReference type="STRING" id="76114.ebA1712"/>
<dbReference type="KEGG" id="eba:ebA1712"/>
<dbReference type="eggNOG" id="COG0422">
    <property type="taxonomic scope" value="Bacteria"/>
</dbReference>
<dbReference type="HOGENOM" id="CLU_013181_2_1_4"/>
<dbReference type="OrthoDB" id="9805897at2"/>
<dbReference type="UniPathway" id="UPA00060"/>
<dbReference type="Proteomes" id="UP000006552">
    <property type="component" value="Chromosome"/>
</dbReference>
<dbReference type="GO" id="GO:0005829">
    <property type="term" value="C:cytosol"/>
    <property type="evidence" value="ECO:0007669"/>
    <property type="project" value="TreeGrafter"/>
</dbReference>
<dbReference type="GO" id="GO:0051539">
    <property type="term" value="F:4 iron, 4 sulfur cluster binding"/>
    <property type="evidence" value="ECO:0007669"/>
    <property type="project" value="UniProtKB-KW"/>
</dbReference>
<dbReference type="GO" id="GO:0016830">
    <property type="term" value="F:carbon-carbon lyase activity"/>
    <property type="evidence" value="ECO:0007669"/>
    <property type="project" value="InterPro"/>
</dbReference>
<dbReference type="GO" id="GO:0008270">
    <property type="term" value="F:zinc ion binding"/>
    <property type="evidence" value="ECO:0007669"/>
    <property type="project" value="UniProtKB-UniRule"/>
</dbReference>
<dbReference type="GO" id="GO:0009228">
    <property type="term" value="P:thiamine biosynthetic process"/>
    <property type="evidence" value="ECO:0007669"/>
    <property type="project" value="UniProtKB-KW"/>
</dbReference>
<dbReference type="GO" id="GO:0009229">
    <property type="term" value="P:thiamine diphosphate biosynthetic process"/>
    <property type="evidence" value="ECO:0007669"/>
    <property type="project" value="UniProtKB-UniRule"/>
</dbReference>
<dbReference type="FunFam" id="3.20.20.540:FF:000001">
    <property type="entry name" value="Phosphomethylpyrimidine synthase"/>
    <property type="match status" value="1"/>
</dbReference>
<dbReference type="Gene3D" id="6.10.250.620">
    <property type="match status" value="1"/>
</dbReference>
<dbReference type="Gene3D" id="3.20.20.540">
    <property type="entry name" value="Radical SAM ThiC family, central domain"/>
    <property type="match status" value="1"/>
</dbReference>
<dbReference type="HAMAP" id="MF_00089">
    <property type="entry name" value="ThiC"/>
    <property type="match status" value="1"/>
</dbReference>
<dbReference type="InterPro" id="IPR037509">
    <property type="entry name" value="ThiC"/>
</dbReference>
<dbReference type="InterPro" id="IPR025747">
    <property type="entry name" value="ThiC-associated_dom"/>
</dbReference>
<dbReference type="InterPro" id="IPR038521">
    <property type="entry name" value="ThiC/Bza_core_dom"/>
</dbReference>
<dbReference type="InterPro" id="IPR002817">
    <property type="entry name" value="ThiC/BzaA/B"/>
</dbReference>
<dbReference type="NCBIfam" id="NF006763">
    <property type="entry name" value="PRK09284.1"/>
    <property type="match status" value="1"/>
</dbReference>
<dbReference type="NCBIfam" id="NF009895">
    <property type="entry name" value="PRK13352.1"/>
    <property type="match status" value="1"/>
</dbReference>
<dbReference type="NCBIfam" id="TIGR00190">
    <property type="entry name" value="thiC"/>
    <property type="match status" value="1"/>
</dbReference>
<dbReference type="PANTHER" id="PTHR30557:SF1">
    <property type="entry name" value="PHOSPHOMETHYLPYRIMIDINE SYNTHASE, CHLOROPLASTIC"/>
    <property type="match status" value="1"/>
</dbReference>
<dbReference type="PANTHER" id="PTHR30557">
    <property type="entry name" value="THIAMINE BIOSYNTHESIS PROTEIN THIC"/>
    <property type="match status" value="1"/>
</dbReference>
<dbReference type="Pfam" id="PF13667">
    <property type="entry name" value="ThiC-associated"/>
    <property type="match status" value="1"/>
</dbReference>
<dbReference type="Pfam" id="PF01964">
    <property type="entry name" value="ThiC_Rad_SAM"/>
    <property type="match status" value="1"/>
</dbReference>
<dbReference type="SFLD" id="SFLDF00407">
    <property type="entry name" value="phosphomethylpyrimidine_syntha"/>
    <property type="match status" value="1"/>
</dbReference>
<dbReference type="SFLD" id="SFLDG01114">
    <property type="entry name" value="phosphomethylpyrimidine_syntha"/>
    <property type="match status" value="1"/>
</dbReference>
<dbReference type="SFLD" id="SFLDS00113">
    <property type="entry name" value="Radical_SAM_Phosphomethylpyrim"/>
    <property type="match status" value="1"/>
</dbReference>
<sequence>MNASEKFIAAKAHVDEAAVAPLPNSRKIHVEGSRPDIRVPMREISQADTPASMGAEPNPPIFVYDCSGPYTDPTAKIDIRSGLVALRQQWIEERGDTEVLADLSSEFGRSRAADKALDELRFPGLHRHPRRAKAGMNVSQMHYARRGLITPEMEYVAIRENMNRAAYVESLRTAGPTGEKMAKLLTRQHPGQSFGASIPEEITPEFVRSEVARGRAIIPNNINHPESEPMIIGRNFLVKINANIGNSALGSSISEEVDKMTWAIRWGGDTVMDLSTGKNIHETREWIIRNSPVPIGTVPIYQALEKVDGKAEELTWEIFRDTLIEQAEQGVDYFTIHAGVLLRYVPMTANRMTGIVSRGGSIMAKWCLAHHKESFLYTHFEDICDIMKAYDVAFSLGDGLRPGSIYDANDDAQLGELKTLGELTDIAWKHDVQTIIEGPGHVPMHLIKENMDLQLEHCKEAPFYTLGPLTTDIAPGYDHITSGIGAAQIGWYGTAMLCYVTPKEHLGLPNKQDVKEGIITYKLAAHAADLAKGHPGAQIRDNALSKARFEFRWEDQFNLGLDPDKAKEFHDETLPKDSAKVAHFCSMCGPHFCSMKITQDVRDFAAKEGLKEDEALAKGMEVKAVEFVKSGAEVYRQV</sequence>
<gene>
    <name evidence="1" type="primary">thiC</name>
    <name type="ordered locus">AZOSEA09230</name>
    <name type="ORF">ebA1712</name>
</gene>
<proteinExistence type="inferred from homology"/>